<organism>
    <name type="scientific">Caenorhabditis elegans</name>
    <dbReference type="NCBI Taxonomy" id="6239"/>
    <lineage>
        <taxon>Eukaryota</taxon>
        <taxon>Metazoa</taxon>
        <taxon>Ecdysozoa</taxon>
        <taxon>Nematoda</taxon>
        <taxon>Chromadorea</taxon>
        <taxon>Rhabditida</taxon>
        <taxon>Rhabditina</taxon>
        <taxon>Rhabditomorpha</taxon>
        <taxon>Rhabditoidea</taxon>
        <taxon>Rhabditidae</taxon>
        <taxon>Peloderinae</taxon>
        <taxon>Caenorhabditis</taxon>
    </lineage>
</organism>
<feature type="chain" id="PRO_0000110584" description="Putative glutaminase 2">
    <location>
        <begin position="1"/>
        <end position="605"/>
    </location>
</feature>
<feature type="repeat" description="ANK 1">
    <location>
        <begin position="480"/>
        <end position="509"/>
    </location>
</feature>
<feature type="repeat" description="ANK 2">
    <location>
        <begin position="513"/>
        <end position="543"/>
    </location>
</feature>
<feature type="region of interest" description="Disordered" evidence="2">
    <location>
        <begin position="569"/>
        <end position="605"/>
    </location>
</feature>
<feature type="compositionally biased region" description="Basic and acidic residues" evidence="2">
    <location>
        <begin position="569"/>
        <end position="581"/>
    </location>
</feature>
<feature type="compositionally biased region" description="Acidic residues" evidence="2">
    <location>
        <begin position="586"/>
        <end position="595"/>
    </location>
</feature>
<feature type="binding site" evidence="1">
    <location>
        <position position="213"/>
    </location>
    <ligand>
        <name>substrate</name>
    </ligand>
</feature>
<feature type="binding site" evidence="1">
    <location>
        <position position="262"/>
    </location>
    <ligand>
        <name>substrate</name>
    </ligand>
</feature>
<feature type="binding site" evidence="1">
    <location>
        <position position="308"/>
    </location>
    <ligand>
        <name>substrate</name>
    </ligand>
</feature>
<feature type="binding site" evidence="1">
    <location>
        <position position="315"/>
    </location>
    <ligand>
        <name>substrate</name>
    </ligand>
</feature>
<feature type="binding site" evidence="1">
    <location>
        <position position="342"/>
    </location>
    <ligand>
        <name>substrate</name>
    </ligand>
</feature>
<feature type="binding site" evidence="1">
    <location>
        <position position="394"/>
    </location>
    <ligand>
        <name>substrate</name>
    </ligand>
</feature>
<feature type="binding site" evidence="1">
    <location>
        <position position="412"/>
    </location>
    <ligand>
        <name>substrate</name>
    </ligand>
</feature>
<accession>Q19013</accession>
<reference key="1">
    <citation type="journal article" date="1998" name="Science">
        <title>Genome sequence of the nematode C. elegans: a platform for investigating biology.</title>
        <authorList>
            <consortium name="The C. elegans sequencing consortium"/>
        </authorList>
    </citation>
    <scope>NUCLEOTIDE SEQUENCE [LARGE SCALE GENOMIC DNA]</scope>
    <source>
        <strain>Bristol N2</strain>
    </source>
</reference>
<proteinExistence type="inferred from homology"/>
<keyword id="KW-0040">ANK repeat</keyword>
<keyword id="KW-0378">Hydrolase</keyword>
<keyword id="KW-1185">Reference proteome</keyword>
<keyword id="KW-0677">Repeat</keyword>
<name>GLS2_CAEEL</name>
<evidence type="ECO:0000250" key="1"/>
<evidence type="ECO:0000256" key="2">
    <source>
        <dbReference type="SAM" id="MobiDB-lite"/>
    </source>
</evidence>
<evidence type="ECO:0000305" key="3"/>
<protein>
    <recommendedName>
        <fullName>Putative glutaminase 2</fullName>
        <shortName>GLS</shortName>
        <ecNumber>3.5.1.2</ecNumber>
    </recommendedName>
    <alternativeName>
        <fullName>L-glutamine amidohydrolase</fullName>
    </alternativeName>
</protein>
<comment type="catalytic activity">
    <reaction>
        <text>L-glutamine + H2O = L-glutamate + NH4(+)</text>
        <dbReference type="Rhea" id="RHEA:15889"/>
        <dbReference type="ChEBI" id="CHEBI:15377"/>
        <dbReference type="ChEBI" id="CHEBI:28938"/>
        <dbReference type="ChEBI" id="CHEBI:29985"/>
        <dbReference type="ChEBI" id="CHEBI:58359"/>
        <dbReference type="EC" id="3.5.1.2"/>
    </reaction>
</comment>
<comment type="similarity">
    <text evidence="3">Belongs to the glutaminase family.</text>
</comment>
<dbReference type="EC" id="3.5.1.2"/>
<dbReference type="EMBL" id="Z49126">
    <property type="protein sequence ID" value="CAA88938.2"/>
    <property type="molecule type" value="Genomic_DNA"/>
</dbReference>
<dbReference type="PIR" id="T20384">
    <property type="entry name" value="T20384"/>
</dbReference>
<dbReference type="RefSeq" id="NP_495675.1">
    <property type="nucleotide sequence ID" value="NM_063274.4"/>
</dbReference>
<dbReference type="SMR" id="Q19013"/>
<dbReference type="BioGRID" id="39614">
    <property type="interactions" value="1"/>
</dbReference>
<dbReference type="DIP" id="DIP-59881N"/>
<dbReference type="FunCoup" id="Q19013">
    <property type="interactions" value="1153"/>
</dbReference>
<dbReference type="IntAct" id="Q19013">
    <property type="interactions" value="1"/>
</dbReference>
<dbReference type="STRING" id="6239.DH11.1a.2"/>
<dbReference type="PaxDb" id="6239-DH11.1.2"/>
<dbReference type="PeptideAtlas" id="Q19013"/>
<dbReference type="EnsemblMetazoa" id="DH11.1a.1">
    <property type="protein sequence ID" value="DH11.1a.1"/>
    <property type="gene ID" value="WBGene00008435"/>
</dbReference>
<dbReference type="GeneID" id="174282"/>
<dbReference type="KEGG" id="cel:CELE_DH11.1"/>
<dbReference type="UCSC" id="DH11.1.1">
    <property type="organism name" value="c. elegans"/>
</dbReference>
<dbReference type="AGR" id="WB:WBGene00008435"/>
<dbReference type="CTD" id="174282"/>
<dbReference type="WormBase" id="DH11.1a">
    <property type="protein sequence ID" value="CE28902"/>
    <property type="gene ID" value="WBGene00008435"/>
    <property type="gene designation" value="glna-2"/>
</dbReference>
<dbReference type="eggNOG" id="KOG0506">
    <property type="taxonomic scope" value="Eukaryota"/>
</dbReference>
<dbReference type="GeneTree" id="ENSGT00390000010463"/>
<dbReference type="HOGENOM" id="CLU_016439_1_0_1"/>
<dbReference type="InParanoid" id="Q19013"/>
<dbReference type="OMA" id="EYQQDWK"/>
<dbReference type="OrthoDB" id="9995210at2759"/>
<dbReference type="PhylomeDB" id="Q19013"/>
<dbReference type="Reactome" id="R-CEL-210500">
    <property type="pathway name" value="Glutamate Neurotransmitter Release Cycle"/>
</dbReference>
<dbReference type="Reactome" id="R-CEL-5628897">
    <property type="pathway name" value="TP53 Regulates Metabolic Genes"/>
</dbReference>
<dbReference type="Reactome" id="R-CEL-8964539">
    <property type="pathway name" value="Glutamate and glutamine metabolism"/>
</dbReference>
<dbReference type="PRO" id="PR:Q19013"/>
<dbReference type="Proteomes" id="UP000001940">
    <property type="component" value="Chromosome II"/>
</dbReference>
<dbReference type="Bgee" id="WBGene00008435">
    <property type="expression patterns" value="Expressed in larva and 2 other cell types or tissues"/>
</dbReference>
<dbReference type="ExpressionAtlas" id="Q19013">
    <property type="expression patterns" value="baseline and differential"/>
</dbReference>
<dbReference type="GO" id="GO:0005739">
    <property type="term" value="C:mitochondrion"/>
    <property type="evidence" value="ECO:0000250"/>
    <property type="project" value="WormBase"/>
</dbReference>
<dbReference type="GO" id="GO:0004359">
    <property type="term" value="F:glutaminase activity"/>
    <property type="evidence" value="ECO:0000318"/>
    <property type="project" value="GO_Central"/>
</dbReference>
<dbReference type="GO" id="GO:0006537">
    <property type="term" value="P:glutamate biosynthetic process"/>
    <property type="evidence" value="ECO:0000318"/>
    <property type="project" value="GO_Central"/>
</dbReference>
<dbReference type="GO" id="GO:0006543">
    <property type="term" value="P:glutamine catabolic process"/>
    <property type="evidence" value="ECO:0000318"/>
    <property type="project" value="GO_Central"/>
</dbReference>
<dbReference type="FunFam" id="3.40.710.10:FF:000008">
    <property type="entry name" value="Glutaminase, isoform E"/>
    <property type="match status" value="1"/>
</dbReference>
<dbReference type="Gene3D" id="1.10.238.210">
    <property type="match status" value="1"/>
</dbReference>
<dbReference type="Gene3D" id="1.25.40.20">
    <property type="entry name" value="Ankyrin repeat-containing domain"/>
    <property type="match status" value="1"/>
</dbReference>
<dbReference type="Gene3D" id="3.40.710.10">
    <property type="entry name" value="DD-peptidase/beta-lactamase superfamily"/>
    <property type="match status" value="1"/>
</dbReference>
<dbReference type="HAMAP" id="MF_00313">
    <property type="entry name" value="Glutaminase"/>
    <property type="match status" value="1"/>
</dbReference>
<dbReference type="InterPro" id="IPR002110">
    <property type="entry name" value="Ankyrin_rpt"/>
</dbReference>
<dbReference type="InterPro" id="IPR036770">
    <property type="entry name" value="Ankyrin_rpt-contain_sf"/>
</dbReference>
<dbReference type="InterPro" id="IPR012338">
    <property type="entry name" value="Beta-lactam/transpept-like"/>
</dbReference>
<dbReference type="InterPro" id="IPR015868">
    <property type="entry name" value="Glutaminase"/>
</dbReference>
<dbReference type="InterPro" id="IPR041541">
    <property type="entry name" value="Glutaminase_EF-hand"/>
</dbReference>
<dbReference type="NCBIfam" id="TIGR03814">
    <property type="entry name" value="Gln_ase"/>
    <property type="match status" value="1"/>
</dbReference>
<dbReference type="PANTHER" id="PTHR12544">
    <property type="entry name" value="GLUTAMINASE"/>
    <property type="match status" value="1"/>
</dbReference>
<dbReference type="PANTHER" id="PTHR12544:SF7">
    <property type="entry name" value="GLUTAMINASE 2-RELATED"/>
    <property type="match status" value="1"/>
</dbReference>
<dbReference type="Pfam" id="PF12796">
    <property type="entry name" value="Ank_2"/>
    <property type="match status" value="1"/>
</dbReference>
<dbReference type="Pfam" id="PF17959">
    <property type="entry name" value="EF-hand_14"/>
    <property type="match status" value="1"/>
</dbReference>
<dbReference type="Pfam" id="PF04960">
    <property type="entry name" value="Glutaminase"/>
    <property type="match status" value="1"/>
</dbReference>
<dbReference type="SUPFAM" id="SSF48403">
    <property type="entry name" value="Ankyrin repeat"/>
    <property type="match status" value="1"/>
</dbReference>
<dbReference type="SUPFAM" id="SSF56601">
    <property type="entry name" value="beta-lactamase/transpeptidase-like"/>
    <property type="match status" value="1"/>
</dbReference>
<dbReference type="PROSITE" id="PS50297">
    <property type="entry name" value="ANK_REP_REGION"/>
    <property type="match status" value="1"/>
</dbReference>
<gene>
    <name type="primary">glna-2</name>
    <name type="ORF">DH11.1</name>
</gene>
<sequence>MTSKPTTQKSVMYRIPSERTLESLHEMIGSRMSKMSLKNTLRGISNPYERDENEGSEDMIFELFKIPNKNEASIGKLLTVLRQLGLRDDDPRLVPMMEKIKDFEKIAEEKCSEATEQKHWKLTKEQFKECIAPSIDIVSRALQTDMVIPNWVTFVDQIRTLFNECKEIREGQVATYIPQLARQSPNLWAVSLCTVDGQRASFGDVKHPFCVQSVSKAFNYAIVASDLGADVVHSYVGQEPSGRLFNEICLDSTNKPHNPMVNSGAIVITSLIKSKTNMADRFDFVLNQYRKIAGNEFIGFNNATFLSERATADRNYALSYFMKENRCFPKETESLTDALDFYFQLCSVEVTCESLAVMASTLANGGVCPITNETCVDPNPCRDVLSLMYSCGMYDASGQFSFNVGLPAKSGVSGAMIVVVPNVMGICLFSPPLDSLGNSCRGVAFCKKLVSTFNFHNYDCLVHNSNIKSDPRRRDIRERDRLIPVFHVARAGDLPTMRRLYMQGEDLNTSDHDDRTVLHIAATEGYETMIKFLVNVAKVDVDKKDRWGRTPLDEAKFFKHDHVSRFLEKAMKRPEQHRKDSVSSLDTDDEIDDDGFPEKPSFTID</sequence>